<evidence type="ECO:0000255" key="1">
    <source>
        <dbReference type="HAMAP-Rule" id="MF_00147"/>
    </source>
</evidence>
<gene>
    <name evidence="1" type="primary">tpiA</name>
    <name type="ordered locus">NMA0570</name>
</gene>
<sequence>MWDQKWVIGNWKMNGRLQNNNSLMHRFRILPTAERVLIGLAAPTVYLLQLHNAMQIVLNNRILTCAQDVSRFPDNGAYTGEVSAEMLADTGTDIVLIGHSERSLYFGEKNEIQRRKMENVLNVGLIPLLCVGESLEEREAGKEHEVIAHQLSILQGLDTKNIAVAYEPVWAIGTGKVATVEQIADMHAFIYKEILSLCGSDVKIRVLYGGSVKADNAADIFAVPYVDGALVGGASLSYDSFTAIISAAQNA</sequence>
<protein>
    <recommendedName>
        <fullName evidence="1">Triosephosphate isomerase</fullName>
        <shortName evidence="1">TIM</shortName>
        <shortName evidence="1">TPI</shortName>
        <ecNumber evidence="1">5.3.1.1</ecNumber>
    </recommendedName>
    <alternativeName>
        <fullName evidence="1">Triose-phosphate isomerase</fullName>
    </alternativeName>
</protein>
<accession>Q9JW31</accession>
<accession>A1IQ15</accession>
<name>TPIS_NEIMA</name>
<comment type="function">
    <text evidence="1">Involved in the gluconeogenesis. Catalyzes stereospecifically the conversion of dihydroxyacetone phosphate (DHAP) to D-glyceraldehyde-3-phosphate (G3P).</text>
</comment>
<comment type="catalytic activity">
    <reaction evidence="1">
        <text>D-glyceraldehyde 3-phosphate = dihydroxyacetone phosphate</text>
        <dbReference type="Rhea" id="RHEA:18585"/>
        <dbReference type="ChEBI" id="CHEBI:57642"/>
        <dbReference type="ChEBI" id="CHEBI:59776"/>
        <dbReference type="EC" id="5.3.1.1"/>
    </reaction>
</comment>
<comment type="pathway">
    <text evidence="1">Carbohydrate biosynthesis; gluconeogenesis.</text>
</comment>
<comment type="pathway">
    <text evidence="1">Carbohydrate degradation; glycolysis; D-glyceraldehyde 3-phosphate from glycerone phosphate: step 1/1.</text>
</comment>
<comment type="subunit">
    <text evidence="1">Homodimer.</text>
</comment>
<comment type="subcellular location">
    <subcellularLocation>
        <location evidence="1">Cytoplasm</location>
    </subcellularLocation>
</comment>
<comment type="similarity">
    <text evidence="1">Belongs to the triosephosphate isomerase family.</text>
</comment>
<feature type="chain" id="PRO_0000090258" description="Triosephosphate isomerase">
    <location>
        <begin position="1"/>
        <end position="251"/>
    </location>
</feature>
<feature type="active site" description="Electrophile" evidence="1">
    <location>
        <position position="99"/>
    </location>
</feature>
<feature type="active site" description="Proton acceptor" evidence="1">
    <location>
        <position position="167"/>
    </location>
</feature>
<feature type="binding site" evidence="1">
    <location>
        <begin position="10"/>
        <end position="12"/>
    </location>
    <ligand>
        <name>substrate</name>
    </ligand>
</feature>
<feature type="binding site" evidence="1">
    <location>
        <position position="173"/>
    </location>
    <ligand>
        <name>substrate</name>
    </ligand>
</feature>
<feature type="binding site" evidence="1">
    <location>
        <position position="211"/>
    </location>
    <ligand>
        <name>substrate</name>
    </ligand>
</feature>
<feature type="binding site" evidence="1">
    <location>
        <begin position="232"/>
        <end position="233"/>
    </location>
    <ligand>
        <name>substrate</name>
    </ligand>
</feature>
<organism>
    <name type="scientific">Neisseria meningitidis serogroup A / serotype 4A (strain DSM 15465 / Z2491)</name>
    <dbReference type="NCBI Taxonomy" id="122587"/>
    <lineage>
        <taxon>Bacteria</taxon>
        <taxon>Pseudomonadati</taxon>
        <taxon>Pseudomonadota</taxon>
        <taxon>Betaproteobacteria</taxon>
        <taxon>Neisseriales</taxon>
        <taxon>Neisseriaceae</taxon>
        <taxon>Neisseria</taxon>
    </lineage>
</organism>
<proteinExistence type="inferred from homology"/>
<dbReference type="EC" id="5.3.1.1" evidence="1"/>
<dbReference type="EMBL" id="AL157959">
    <property type="protein sequence ID" value="CAM07841.1"/>
    <property type="molecule type" value="Genomic_DNA"/>
</dbReference>
<dbReference type="PIR" id="G81975">
    <property type="entry name" value="G81975"/>
</dbReference>
<dbReference type="SMR" id="Q9JW31"/>
<dbReference type="EnsemblBacteria" id="CAM07841">
    <property type="protein sequence ID" value="CAM07841"/>
    <property type="gene ID" value="NMA0570"/>
</dbReference>
<dbReference type="KEGG" id="nma:NMA0570"/>
<dbReference type="HOGENOM" id="CLU_024251_2_1_4"/>
<dbReference type="UniPathway" id="UPA00109">
    <property type="reaction ID" value="UER00189"/>
</dbReference>
<dbReference type="UniPathway" id="UPA00138"/>
<dbReference type="Proteomes" id="UP000000626">
    <property type="component" value="Chromosome"/>
</dbReference>
<dbReference type="GO" id="GO:0005829">
    <property type="term" value="C:cytosol"/>
    <property type="evidence" value="ECO:0007669"/>
    <property type="project" value="TreeGrafter"/>
</dbReference>
<dbReference type="GO" id="GO:0004807">
    <property type="term" value="F:triose-phosphate isomerase activity"/>
    <property type="evidence" value="ECO:0007669"/>
    <property type="project" value="UniProtKB-UniRule"/>
</dbReference>
<dbReference type="GO" id="GO:0006094">
    <property type="term" value="P:gluconeogenesis"/>
    <property type="evidence" value="ECO:0007669"/>
    <property type="project" value="UniProtKB-UniRule"/>
</dbReference>
<dbReference type="GO" id="GO:0046166">
    <property type="term" value="P:glyceraldehyde-3-phosphate biosynthetic process"/>
    <property type="evidence" value="ECO:0007669"/>
    <property type="project" value="TreeGrafter"/>
</dbReference>
<dbReference type="GO" id="GO:0019563">
    <property type="term" value="P:glycerol catabolic process"/>
    <property type="evidence" value="ECO:0007669"/>
    <property type="project" value="TreeGrafter"/>
</dbReference>
<dbReference type="GO" id="GO:0006096">
    <property type="term" value="P:glycolytic process"/>
    <property type="evidence" value="ECO:0007669"/>
    <property type="project" value="UniProtKB-UniRule"/>
</dbReference>
<dbReference type="CDD" id="cd00311">
    <property type="entry name" value="TIM"/>
    <property type="match status" value="1"/>
</dbReference>
<dbReference type="FunFam" id="3.20.20.70:FF:000016">
    <property type="entry name" value="Triosephosphate isomerase"/>
    <property type="match status" value="1"/>
</dbReference>
<dbReference type="Gene3D" id="3.20.20.70">
    <property type="entry name" value="Aldolase class I"/>
    <property type="match status" value="1"/>
</dbReference>
<dbReference type="HAMAP" id="MF_00147_B">
    <property type="entry name" value="TIM_B"/>
    <property type="match status" value="1"/>
</dbReference>
<dbReference type="InterPro" id="IPR013785">
    <property type="entry name" value="Aldolase_TIM"/>
</dbReference>
<dbReference type="InterPro" id="IPR035990">
    <property type="entry name" value="TIM_sf"/>
</dbReference>
<dbReference type="InterPro" id="IPR022896">
    <property type="entry name" value="TrioseP_Isoase_bac/euk"/>
</dbReference>
<dbReference type="InterPro" id="IPR000652">
    <property type="entry name" value="Triosephosphate_isomerase"/>
</dbReference>
<dbReference type="InterPro" id="IPR020861">
    <property type="entry name" value="Triosephosphate_isomerase_AS"/>
</dbReference>
<dbReference type="NCBIfam" id="TIGR00419">
    <property type="entry name" value="tim"/>
    <property type="match status" value="1"/>
</dbReference>
<dbReference type="PANTHER" id="PTHR21139">
    <property type="entry name" value="TRIOSEPHOSPHATE ISOMERASE"/>
    <property type="match status" value="1"/>
</dbReference>
<dbReference type="PANTHER" id="PTHR21139:SF42">
    <property type="entry name" value="TRIOSEPHOSPHATE ISOMERASE"/>
    <property type="match status" value="1"/>
</dbReference>
<dbReference type="Pfam" id="PF00121">
    <property type="entry name" value="TIM"/>
    <property type="match status" value="1"/>
</dbReference>
<dbReference type="SUPFAM" id="SSF51351">
    <property type="entry name" value="Triosephosphate isomerase (TIM)"/>
    <property type="match status" value="1"/>
</dbReference>
<dbReference type="PROSITE" id="PS00171">
    <property type="entry name" value="TIM_1"/>
    <property type="match status" value="1"/>
</dbReference>
<dbReference type="PROSITE" id="PS51440">
    <property type="entry name" value="TIM_2"/>
    <property type="match status" value="1"/>
</dbReference>
<reference key="1">
    <citation type="journal article" date="2000" name="Nature">
        <title>Complete DNA sequence of a serogroup A strain of Neisseria meningitidis Z2491.</title>
        <authorList>
            <person name="Parkhill J."/>
            <person name="Achtman M."/>
            <person name="James K.D."/>
            <person name="Bentley S.D."/>
            <person name="Churcher C.M."/>
            <person name="Klee S.R."/>
            <person name="Morelli G."/>
            <person name="Basham D."/>
            <person name="Brown D."/>
            <person name="Chillingworth T."/>
            <person name="Davies R.M."/>
            <person name="Davis P."/>
            <person name="Devlin K."/>
            <person name="Feltwell T."/>
            <person name="Hamlin N."/>
            <person name="Holroyd S."/>
            <person name="Jagels K."/>
            <person name="Leather S."/>
            <person name="Moule S."/>
            <person name="Mungall K.L."/>
            <person name="Quail M.A."/>
            <person name="Rajandream M.A."/>
            <person name="Rutherford K.M."/>
            <person name="Simmonds M."/>
            <person name="Skelton J."/>
            <person name="Whitehead S."/>
            <person name="Spratt B.G."/>
            <person name="Barrell B.G."/>
        </authorList>
    </citation>
    <scope>NUCLEOTIDE SEQUENCE [LARGE SCALE GENOMIC DNA]</scope>
    <source>
        <strain>DSM 15465 / Z2491</strain>
    </source>
</reference>
<keyword id="KW-0963">Cytoplasm</keyword>
<keyword id="KW-0312">Gluconeogenesis</keyword>
<keyword id="KW-0324">Glycolysis</keyword>
<keyword id="KW-0413">Isomerase</keyword>